<evidence type="ECO:0000255" key="1"/>
<evidence type="ECO:0000305" key="2"/>
<comment type="subcellular location">
    <subcellularLocation>
        <location evidence="2">Cell membrane</location>
        <topology evidence="2">Single-pass membrane protein</topology>
    </subcellularLocation>
</comment>
<keyword id="KW-1003">Cell membrane</keyword>
<keyword id="KW-0472">Membrane</keyword>
<keyword id="KW-1185">Reference proteome</keyword>
<keyword id="KW-0812">Transmembrane</keyword>
<keyword id="KW-1133">Transmembrane helix</keyword>
<dbReference type="EMBL" id="AB006424">
    <property type="protein sequence ID" value="BAA33085.1"/>
    <property type="molecule type" value="Genomic_DNA"/>
</dbReference>
<dbReference type="EMBL" id="AL009126">
    <property type="protein sequence ID" value="CAB11983.1"/>
    <property type="molecule type" value="Genomic_DNA"/>
</dbReference>
<dbReference type="PIR" id="B69746">
    <property type="entry name" value="B69746"/>
</dbReference>
<dbReference type="RefSeq" id="NP_388071.1">
    <property type="nucleotide sequence ID" value="NC_000964.3"/>
</dbReference>
<dbReference type="RefSeq" id="WP_009966415.1">
    <property type="nucleotide sequence ID" value="NC_000964.3"/>
</dbReference>
<dbReference type="SMR" id="O31421"/>
<dbReference type="FunCoup" id="O31421">
    <property type="interactions" value="101"/>
</dbReference>
<dbReference type="STRING" id="224308.BSU01900"/>
<dbReference type="PaxDb" id="224308-BSU01900"/>
<dbReference type="EnsemblBacteria" id="CAB11983">
    <property type="protein sequence ID" value="CAB11983"/>
    <property type="gene ID" value="BSU_01900"/>
</dbReference>
<dbReference type="GeneID" id="938504"/>
<dbReference type="KEGG" id="bsu:BSU01900"/>
<dbReference type="PATRIC" id="fig|224308.179.peg.197"/>
<dbReference type="eggNOG" id="COG0449">
    <property type="taxonomic scope" value="Bacteria"/>
</dbReference>
<dbReference type="InParanoid" id="O31421"/>
<dbReference type="OrthoDB" id="9883220at2"/>
<dbReference type="BioCyc" id="BSUB:BSU01900-MONOMER"/>
<dbReference type="Proteomes" id="UP000001570">
    <property type="component" value="Chromosome"/>
</dbReference>
<dbReference type="GO" id="GO:0005886">
    <property type="term" value="C:plasma membrane"/>
    <property type="evidence" value="ECO:0007669"/>
    <property type="project" value="UniProtKB-SubCell"/>
</dbReference>
<name>YBCM_BACSU</name>
<accession>O31421</accession>
<accession>Q7DL64</accession>
<organism>
    <name type="scientific">Bacillus subtilis (strain 168)</name>
    <dbReference type="NCBI Taxonomy" id="224308"/>
    <lineage>
        <taxon>Bacteria</taxon>
        <taxon>Bacillati</taxon>
        <taxon>Bacillota</taxon>
        <taxon>Bacilli</taxon>
        <taxon>Bacillales</taxon>
        <taxon>Bacillaceae</taxon>
        <taxon>Bacillus</taxon>
    </lineage>
</organism>
<proteinExistence type="predicted"/>
<sequence>MRFLKALPRRAEVQYDCLDRTLETQENVNLNIRVNVKEVATWGVNTCIISLKGLDNADDRFVLPEVNTALALFPLSIAADCLLMLPCISVVMSISSVMKSVTVE</sequence>
<feature type="chain" id="PRO_0000360627" description="Uncharacterized protein YbcM">
    <location>
        <begin position="1"/>
        <end position="104"/>
    </location>
</feature>
<feature type="transmembrane region" description="Helical" evidence="1">
    <location>
        <begin position="81"/>
        <end position="97"/>
    </location>
</feature>
<gene>
    <name type="primary">ybcM</name>
    <name type="ordered locus">BSU01900</name>
</gene>
<protein>
    <recommendedName>
        <fullName>Uncharacterized protein YbcM</fullName>
    </recommendedName>
</protein>
<reference key="1">
    <citation type="submission" date="1997-07" db="EMBL/GenBank/DDBJ databases">
        <title>Sequence analysis of the 70kb region between 17 and 23 degree of the Bacillus subtilis chromosome.</title>
        <authorList>
            <person name="Haga K."/>
            <person name="Liu H."/>
            <person name="Yasumoto K."/>
            <person name="Takahashi H."/>
            <person name="Yoshikawa H."/>
        </authorList>
    </citation>
    <scope>NUCLEOTIDE SEQUENCE [GENOMIC DNA]</scope>
    <source>
        <strain>168</strain>
    </source>
</reference>
<reference key="2">
    <citation type="journal article" date="1997" name="Nature">
        <title>The complete genome sequence of the Gram-positive bacterium Bacillus subtilis.</title>
        <authorList>
            <person name="Kunst F."/>
            <person name="Ogasawara N."/>
            <person name="Moszer I."/>
            <person name="Albertini A.M."/>
            <person name="Alloni G."/>
            <person name="Azevedo V."/>
            <person name="Bertero M.G."/>
            <person name="Bessieres P."/>
            <person name="Bolotin A."/>
            <person name="Borchert S."/>
            <person name="Borriss R."/>
            <person name="Boursier L."/>
            <person name="Brans A."/>
            <person name="Braun M."/>
            <person name="Brignell S.C."/>
            <person name="Bron S."/>
            <person name="Brouillet S."/>
            <person name="Bruschi C.V."/>
            <person name="Caldwell B."/>
            <person name="Capuano V."/>
            <person name="Carter N.M."/>
            <person name="Choi S.-K."/>
            <person name="Codani J.-J."/>
            <person name="Connerton I.F."/>
            <person name="Cummings N.J."/>
            <person name="Daniel R.A."/>
            <person name="Denizot F."/>
            <person name="Devine K.M."/>
            <person name="Duesterhoeft A."/>
            <person name="Ehrlich S.D."/>
            <person name="Emmerson P.T."/>
            <person name="Entian K.-D."/>
            <person name="Errington J."/>
            <person name="Fabret C."/>
            <person name="Ferrari E."/>
            <person name="Foulger D."/>
            <person name="Fritz C."/>
            <person name="Fujita M."/>
            <person name="Fujita Y."/>
            <person name="Fuma S."/>
            <person name="Galizzi A."/>
            <person name="Galleron N."/>
            <person name="Ghim S.-Y."/>
            <person name="Glaser P."/>
            <person name="Goffeau A."/>
            <person name="Golightly E.J."/>
            <person name="Grandi G."/>
            <person name="Guiseppi G."/>
            <person name="Guy B.J."/>
            <person name="Haga K."/>
            <person name="Haiech J."/>
            <person name="Harwood C.R."/>
            <person name="Henaut A."/>
            <person name="Hilbert H."/>
            <person name="Holsappel S."/>
            <person name="Hosono S."/>
            <person name="Hullo M.-F."/>
            <person name="Itaya M."/>
            <person name="Jones L.-M."/>
            <person name="Joris B."/>
            <person name="Karamata D."/>
            <person name="Kasahara Y."/>
            <person name="Klaerr-Blanchard M."/>
            <person name="Klein C."/>
            <person name="Kobayashi Y."/>
            <person name="Koetter P."/>
            <person name="Koningstein G."/>
            <person name="Krogh S."/>
            <person name="Kumano M."/>
            <person name="Kurita K."/>
            <person name="Lapidus A."/>
            <person name="Lardinois S."/>
            <person name="Lauber J."/>
            <person name="Lazarevic V."/>
            <person name="Lee S.-M."/>
            <person name="Levine A."/>
            <person name="Liu H."/>
            <person name="Masuda S."/>
            <person name="Mauel C."/>
            <person name="Medigue C."/>
            <person name="Medina N."/>
            <person name="Mellado R.P."/>
            <person name="Mizuno M."/>
            <person name="Moestl D."/>
            <person name="Nakai S."/>
            <person name="Noback M."/>
            <person name="Noone D."/>
            <person name="O'Reilly M."/>
            <person name="Ogawa K."/>
            <person name="Ogiwara A."/>
            <person name="Oudega B."/>
            <person name="Park S.-H."/>
            <person name="Parro V."/>
            <person name="Pohl T.M."/>
            <person name="Portetelle D."/>
            <person name="Porwollik S."/>
            <person name="Prescott A.M."/>
            <person name="Presecan E."/>
            <person name="Pujic P."/>
            <person name="Purnelle B."/>
            <person name="Rapoport G."/>
            <person name="Rey M."/>
            <person name="Reynolds S."/>
            <person name="Rieger M."/>
            <person name="Rivolta C."/>
            <person name="Rocha E."/>
            <person name="Roche B."/>
            <person name="Rose M."/>
            <person name="Sadaie Y."/>
            <person name="Sato T."/>
            <person name="Scanlan E."/>
            <person name="Schleich S."/>
            <person name="Schroeter R."/>
            <person name="Scoffone F."/>
            <person name="Sekiguchi J."/>
            <person name="Sekowska A."/>
            <person name="Seror S.J."/>
            <person name="Serror P."/>
            <person name="Shin B.-S."/>
            <person name="Soldo B."/>
            <person name="Sorokin A."/>
            <person name="Tacconi E."/>
            <person name="Takagi T."/>
            <person name="Takahashi H."/>
            <person name="Takemaru K."/>
            <person name="Takeuchi M."/>
            <person name="Tamakoshi A."/>
            <person name="Tanaka T."/>
            <person name="Terpstra P."/>
            <person name="Tognoni A."/>
            <person name="Tosato V."/>
            <person name="Uchiyama S."/>
            <person name="Vandenbol M."/>
            <person name="Vannier F."/>
            <person name="Vassarotti A."/>
            <person name="Viari A."/>
            <person name="Wambutt R."/>
            <person name="Wedler E."/>
            <person name="Wedler H."/>
            <person name="Weitzenegger T."/>
            <person name="Winters P."/>
            <person name="Wipat A."/>
            <person name="Yamamoto H."/>
            <person name="Yamane K."/>
            <person name="Yasumoto K."/>
            <person name="Yata K."/>
            <person name="Yoshida K."/>
            <person name="Yoshikawa H.-F."/>
            <person name="Zumstein E."/>
            <person name="Yoshikawa H."/>
            <person name="Danchin A."/>
        </authorList>
    </citation>
    <scope>NUCLEOTIDE SEQUENCE [LARGE SCALE GENOMIC DNA]</scope>
    <source>
        <strain>168</strain>
    </source>
</reference>